<keyword id="KW-0238">DNA-binding</keyword>
<keyword id="KW-0678">Repressor</keyword>
<keyword id="KW-0804">Transcription</keyword>
<keyword id="KW-0805">Transcription regulation</keyword>
<name>CPIR_ACIAD</name>
<proteinExistence type="predicted"/>
<feature type="chain" id="PRO_0000453800" description="Competence pilus inhibition repressor">
    <location>
        <begin position="1"/>
        <end position="110"/>
    </location>
</feature>
<feature type="domain" description="HTH cro/C1-type" evidence="1">
    <location>
        <begin position="7"/>
        <end position="61"/>
    </location>
</feature>
<feature type="DNA-binding region" description="H-T-H motif" evidence="1">
    <location>
        <begin position="18"/>
        <end position="37"/>
    </location>
</feature>
<sequence>MDIGRAVRFLRKRQGWTQQQLADFSHTSKSNISNLENGNQGYSPAILEYLAKAFNCSVSQIFLLAENMDNEGNLLKDWQHMPIDVLFIQLPQEVQCQLKHLIFTLIDTKK</sequence>
<accession>Q6F9U5</accession>
<gene>
    <name evidence="3" type="primary">cpiR</name>
    <name evidence="4" type="ordered locus">ACIAD2393</name>
</gene>
<dbReference type="EMBL" id="CR543861">
    <property type="protein sequence ID" value="CAG69168.1"/>
    <property type="molecule type" value="Genomic_DNA"/>
</dbReference>
<dbReference type="RefSeq" id="WP_004928260.1">
    <property type="nucleotide sequence ID" value="NC_005966.1"/>
</dbReference>
<dbReference type="SMR" id="Q6F9U5"/>
<dbReference type="GeneID" id="45234705"/>
<dbReference type="KEGG" id="aci:ACIAD2393"/>
<dbReference type="eggNOG" id="ENOG5034AH9">
    <property type="taxonomic scope" value="Bacteria"/>
</dbReference>
<dbReference type="HOGENOM" id="CLU_2260750_0_0_6"/>
<dbReference type="OrthoDB" id="21915at2"/>
<dbReference type="BioCyc" id="ASP62977:ACIAD_RS10940-MONOMER"/>
<dbReference type="Proteomes" id="UP000000430">
    <property type="component" value="Chromosome"/>
</dbReference>
<dbReference type="GO" id="GO:0003677">
    <property type="term" value="F:DNA binding"/>
    <property type="evidence" value="ECO:0007669"/>
    <property type="project" value="UniProtKB-KW"/>
</dbReference>
<dbReference type="CDD" id="cd00093">
    <property type="entry name" value="HTH_XRE"/>
    <property type="match status" value="1"/>
</dbReference>
<dbReference type="Gene3D" id="1.10.260.40">
    <property type="entry name" value="lambda repressor-like DNA-binding domains"/>
    <property type="match status" value="1"/>
</dbReference>
<dbReference type="InterPro" id="IPR001387">
    <property type="entry name" value="Cro/C1-type_HTH"/>
</dbReference>
<dbReference type="InterPro" id="IPR010982">
    <property type="entry name" value="Lambda_DNA-bd_dom_sf"/>
</dbReference>
<dbReference type="PANTHER" id="PTHR46558:SF4">
    <property type="entry name" value="DNA-BIDING PHAGE PROTEIN"/>
    <property type="match status" value="1"/>
</dbReference>
<dbReference type="PANTHER" id="PTHR46558">
    <property type="entry name" value="TRACRIPTIONAL REGULATORY PROTEIN-RELATED-RELATED"/>
    <property type="match status" value="1"/>
</dbReference>
<dbReference type="Pfam" id="PF01381">
    <property type="entry name" value="HTH_3"/>
    <property type="match status" value="1"/>
</dbReference>
<dbReference type="SMART" id="SM00530">
    <property type="entry name" value="HTH_XRE"/>
    <property type="match status" value="1"/>
</dbReference>
<dbReference type="SUPFAM" id="SSF47413">
    <property type="entry name" value="lambda repressor-like DNA-binding domains"/>
    <property type="match status" value="1"/>
</dbReference>
<dbReference type="PROSITE" id="PS50943">
    <property type="entry name" value="HTH_CROC1"/>
    <property type="match status" value="1"/>
</dbReference>
<organism>
    <name type="scientific">Acinetobacter baylyi (strain ATCC 33305 / BD413 / ADP1)</name>
    <dbReference type="NCBI Taxonomy" id="62977"/>
    <lineage>
        <taxon>Bacteria</taxon>
        <taxon>Pseudomonadati</taxon>
        <taxon>Pseudomonadota</taxon>
        <taxon>Gammaproteobacteria</taxon>
        <taxon>Moraxellales</taxon>
        <taxon>Moraxellaceae</taxon>
        <taxon>Acinetobacter</taxon>
    </lineage>
</organism>
<reference key="1">
    <citation type="journal article" date="2004" name="Nucleic Acids Res.">
        <title>Unique features revealed by the genome sequence of Acinetobacter sp. ADP1, a versatile and naturally transformation competent bacterium.</title>
        <authorList>
            <person name="Barbe V."/>
            <person name="Vallenet D."/>
            <person name="Fonknechten N."/>
            <person name="Kreimeyer A."/>
            <person name="Oztas S."/>
            <person name="Labarre L."/>
            <person name="Cruveiller S."/>
            <person name="Robert C."/>
            <person name="Duprat S."/>
            <person name="Wincker P."/>
            <person name="Ornston L.N."/>
            <person name="Weissenbach J."/>
            <person name="Marliere P."/>
            <person name="Cohen G.N."/>
            <person name="Medigue C."/>
        </authorList>
    </citation>
    <scope>NUCLEOTIDE SEQUENCE [LARGE SCALE GENOMIC DNA]</scope>
    <source>
        <strain>ATCC 33305 / BD413 / ADP1</strain>
    </source>
</reference>
<reference key="2">
    <citation type="journal article" date="2021" name="Nat. Commun.">
        <title>Acinetobacter baylyi regulates type IV pilus synthesis by employing two extension motors and a motor protein inhibitor.</title>
        <authorList>
            <person name="Ellison C.K."/>
            <person name="Dalia T.N."/>
            <person name="Klancher C.A."/>
            <person name="Shaevitz J.W."/>
            <person name="Gitai Z."/>
            <person name="Dalia A.B."/>
        </authorList>
    </citation>
    <scope>FUNCTION</scope>
    <scope>DISRUPTION PHENOTYPE</scope>
    <source>
        <strain>ATCC 33305 / BD413 / ADP1</strain>
    </source>
</reference>
<comment type="function">
    <text evidence="2">Represses transcription of the PilB-specific inhibitory protein CpiA.</text>
</comment>
<comment type="disruption phenotype">
    <text evidence="2">Deletion of the gene results in a 100-fold reduction in transformation.</text>
</comment>
<protein>
    <recommendedName>
        <fullName evidence="3">Competence pilus inhibition repressor</fullName>
    </recommendedName>
</protein>
<evidence type="ECO:0000255" key="1">
    <source>
        <dbReference type="PROSITE-ProRule" id="PRU00257"/>
    </source>
</evidence>
<evidence type="ECO:0000269" key="2">
    <source>
    </source>
</evidence>
<evidence type="ECO:0000303" key="3">
    <source>
    </source>
</evidence>
<evidence type="ECO:0000312" key="4">
    <source>
        <dbReference type="EMBL" id="CAG69168.1"/>
    </source>
</evidence>